<feature type="chain" id="PRO_0000072277" description="Vacuolar arginine/histidine antiporter stm1">
    <location>
        <begin position="1"/>
        <end position="271"/>
    </location>
</feature>
<feature type="transmembrane region" description="Helical" evidence="1">
    <location>
        <begin position="17"/>
        <end position="37"/>
    </location>
</feature>
<feature type="transmembrane region" description="Helical" evidence="1">
    <location>
        <begin position="49"/>
        <end position="69"/>
    </location>
</feature>
<feature type="transmembrane region" description="Helical" evidence="1">
    <location>
        <begin position="77"/>
        <end position="97"/>
    </location>
</feature>
<feature type="transmembrane region" description="Helical" evidence="1">
    <location>
        <begin position="144"/>
        <end position="164"/>
    </location>
</feature>
<feature type="transmembrane region" description="Helical" evidence="1">
    <location>
        <begin position="178"/>
        <end position="198"/>
    </location>
</feature>
<feature type="transmembrane region" description="Helical" evidence="1">
    <location>
        <begin position="211"/>
        <end position="231"/>
    </location>
</feature>
<feature type="transmembrane region" description="Helical" evidence="1">
    <location>
        <begin position="245"/>
        <end position="265"/>
    </location>
</feature>
<feature type="domain" description="PQ-loop 1">
    <location>
        <begin position="14"/>
        <end position="80"/>
    </location>
</feature>
<feature type="domain" description="PQ-loop 2">
    <location>
        <begin position="185"/>
        <end position="239"/>
    </location>
</feature>
<feature type="modified residue" description="Phosphoserine" evidence="2">
    <location>
        <position position="119"/>
    </location>
</feature>
<feature type="mutagenesis site" description="Impairs activity." evidence="3">
    <original>P</original>
    <variation>A</variation>
    <location>
        <position position="35"/>
    </location>
</feature>
<feature type="mutagenesis site" description="Impairs activity." evidence="3">
    <original>P</original>
    <variation>A</variation>
    <location>
        <position position="195"/>
    </location>
</feature>
<dbReference type="EMBL" id="L49134">
    <property type="protein sequence ID" value="AAD45180.1"/>
    <property type="molecule type" value="mRNA"/>
</dbReference>
<dbReference type="EMBL" id="CU329670">
    <property type="protein sequence ID" value="CAA97356.1"/>
    <property type="molecule type" value="Genomic_DNA"/>
</dbReference>
<dbReference type="PIR" id="T11590">
    <property type="entry name" value="T11590"/>
</dbReference>
<dbReference type="RefSeq" id="NP_594596.1">
    <property type="nucleotide sequence ID" value="NM_001020024.2"/>
</dbReference>
<dbReference type="SMR" id="Q10482"/>
<dbReference type="BioGRID" id="278731">
    <property type="interactions" value="17"/>
</dbReference>
<dbReference type="FunCoup" id="Q10482">
    <property type="interactions" value="124"/>
</dbReference>
<dbReference type="STRING" id="284812.Q10482"/>
<dbReference type="iPTMnet" id="Q10482"/>
<dbReference type="PaxDb" id="4896-SPAC17C9.10.1"/>
<dbReference type="EnsemblFungi" id="SPAC17C9.10.1">
    <property type="protein sequence ID" value="SPAC17C9.10.1:pep"/>
    <property type="gene ID" value="SPAC17C9.10"/>
</dbReference>
<dbReference type="GeneID" id="2542262"/>
<dbReference type="KEGG" id="spo:2542262"/>
<dbReference type="PomBase" id="SPAC17C9.10">
    <property type="gene designation" value="stm1"/>
</dbReference>
<dbReference type="VEuPathDB" id="FungiDB:SPAC17C9.10"/>
<dbReference type="eggNOG" id="KOG2913">
    <property type="taxonomic scope" value="Eukaryota"/>
</dbReference>
<dbReference type="HOGENOM" id="CLU_019699_1_0_1"/>
<dbReference type="InParanoid" id="Q10482"/>
<dbReference type="OMA" id="QIMQNFR"/>
<dbReference type="PhylomeDB" id="Q10482"/>
<dbReference type="Reactome" id="R-SPO-5223345">
    <property type="pathway name" value="Miscellaneous transport and binding events"/>
</dbReference>
<dbReference type="PRO" id="PR:Q10482"/>
<dbReference type="Proteomes" id="UP000002485">
    <property type="component" value="Chromosome I"/>
</dbReference>
<dbReference type="GO" id="GO:0000329">
    <property type="term" value="C:fungal-type vacuole membrane"/>
    <property type="evidence" value="ECO:0000314"/>
    <property type="project" value="UniProtKB"/>
</dbReference>
<dbReference type="GO" id="GO:0016020">
    <property type="term" value="C:membrane"/>
    <property type="evidence" value="ECO:0000314"/>
    <property type="project" value="PomBase"/>
</dbReference>
<dbReference type="GO" id="GO:0015174">
    <property type="term" value="F:basic amino acid transmembrane transporter activity"/>
    <property type="evidence" value="ECO:0000314"/>
    <property type="project" value="UniProtKB"/>
</dbReference>
<dbReference type="GO" id="GO:0034488">
    <property type="term" value="P:basic amino acid transmembrane export from vacuole"/>
    <property type="evidence" value="ECO:0000266"/>
    <property type="project" value="PomBase"/>
</dbReference>
<dbReference type="GO" id="GO:0015802">
    <property type="term" value="P:basic amino acid transport"/>
    <property type="evidence" value="ECO:0000315"/>
    <property type="project" value="UniProtKB"/>
</dbReference>
<dbReference type="GO" id="GO:0034486">
    <property type="term" value="P:vacuolar transmembrane transport"/>
    <property type="evidence" value="ECO:0000314"/>
    <property type="project" value="UniProtKB"/>
</dbReference>
<dbReference type="FunFam" id="1.20.1280.290:FF:000009">
    <property type="entry name" value="PQ loop repeat family protein"/>
    <property type="match status" value="1"/>
</dbReference>
<dbReference type="Gene3D" id="1.20.1280.290">
    <property type="match status" value="2"/>
</dbReference>
<dbReference type="InterPro" id="IPR051415">
    <property type="entry name" value="LAAT-1"/>
</dbReference>
<dbReference type="InterPro" id="IPR006603">
    <property type="entry name" value="PQ-loop_rpt"/>
</dbReference>
<dbReference type="PANTHER" id="PTHR16201:SF44">
    <property type="entry name" value="SEVEN TRANSMEMBRANE PROTEIN 1"/>
    <property type="match status" value="1"/>
</dbReference>
<dbReference type="PANTHER" id="PTHR16201">
    <property type="entry name" value="SEVEN TRANSMEMBRANE PROTEIN 1-RELATED"/>
    <property type="match status" value="1"/>
</dbReference>
<dbReference type="Pfam" id="PF04193">
    <property type="entry name" value="PQ-loop"/>
    <property type="match status" value="2"/>
</dbReference>
<dbReference type="SMART" id="SM00679">
    <property type="entry name" value="CTNS"/>
    <property type="match status" value="2"/>
</dbReference>
<gene>
    <name type="primary">stm1</name>
    <name type="ORF">SPAC17C9.10</name>
</gene>
<protein>
    <recommendedName>
        <fullName evidence="4">Vacuolar arginine/histidine antiporter stm1</fullName>
    </recommendedName>
    <alternativeName>
        <fullName evidence="4">Seven transmembrane protein 1</fullName>
    </alternativeName>
</protein>
<reference key="1">
    <citation type="journal article" date="2001" name="J. Biol. Chem.">
        <title>Isolation of a novel gene from Schizosaccharomyces pombe: stm1+ encoding a seven-transmembrane loop protein that may couple with the heterotrimeric Galpha 2 protein, Gpa2.</title>
        <authorList>
            <person name="Chung K.-S."/>
            <person name="Won M."/>
            <person name="Lee S.-B."/>
            <person name="Jang Y.-J."/>
            <person name="Hoe K.-L."/>
            <person name="Kim D.-U."/>
            <person name="Lee J.-W."/>
            <person name="Kim K.-W."/>
            <person name="Yoo H.-S."/>
        </authorList>
    </citation>
    <scope>NUCLEOTIDE SEQUENCE [MRNA]</scope>
    <source>
        <strain>ED665</strain>
    </source>
</reference>
<reference key="2">
    <citation type="journal article" date="2002" name="Nature">
        <title>The genome sequence of Schizosaccharomyces pombe.</title>
        <authorList>
            <person name="Wood V."/>
            <person name="Gwilliam R."/>
            <person name="Rajandream M.A."/>
            <person name="Lyne M.H."/>
            <person name="Lyne R."/>
            <person name="Stewart A."/>
            <person name="Sgouros J.G."/>
            <person name="Peat N."/>
            <person name="Hayles J."/>
            <person name="Baker S.G."/>
            <person name="Basham D."/>
            <person name="Bowman S."/>
            <person name="Brooks K."/>
            <person name="Brown D."/>
            <person name="Brown S."/>
            <person name="Chillingworth T."/>
            <person name="Churcher C.M."/>
            <person name="Collins M."/>
            <person name="Connor R."/>
            <person name="Cronin A."/>
            <person name="Davis P."/>
            <person name="Feltwell T."/>
            <person name="Fraser A."/>
            <person name="Gentles S."/>
            <person name="Goble A."/>
            <person name="Hamlin N."/>
            <person name="Harris D.E."/>
            <person name="Hidalgo J."/>
            <person name="Hodgson G."/>
            <person name="Holroyd S."/>
            <person name="Hornsby T."/>
            <person name="Howarth S."/>
            <person name="Huckle E.J."/>
            <person name="Hunt S."/>
            <person name="Jagels K."/>
            <person name="James K.D."/>
            <person name="Jones L."/>
            <person name="Jones M."/>
            <person name="Leather S."/>
            <person name="McDonald S."/>
            <person name="McLean J."/>
            <person name="Mooney P."/>
            <person name="Moule S."/>
            <person name="Mungall K.L."/>
            <person name="Murphy L.D."/>
            <person name="Niblett D."/>
            <person name="Odell C."/>
            <person name="Oliver K."/>
            <person name="O'Neil S."/>
            <person name="Pearson D."/>
            <person name="Quail M.A."/>
            <person name="Rabbinowitsch E."/>
            <person name="Rutherford K.M."/>
            <person name="Rutter S."/>
            <person name="Saunders D."/>
            <person name="Seeger K."/>
            <person name="Sharp S."/>
            <person name="Skelton J."/>
            <person name="Simmonds M.N."/>
            <person name="Squares R."/>
            <person name="Squares S."/>
            <person name="Stevens K."/>
            <person name="Taylor K."/>
            <person name="Taylor R.G."/>
            <person name="Tivey A."/>
            <person name="Walsh S.V."/>
            <person name="Warren T."/>
            <person name="Whitehead S."/>
            <person name="Woodward J.R."/>
            <person name="Volckaert G."/>
            <person name="Aert R."/>
            <person name="Robben J."/>
            <person name="Grymonprez B."/>
            <person name="Weltjens I."/>
            <person name="Vanstreels E."/>
            <person name="Rieger M."/>
            <person name="Schaefer M."/>
            <person name="Mueller-Auer S."/>
            <person name="Gabel C."/>
            <person name="Fuchs M."/>
            <person name="Duesterhoeft A."/>
            <person name="Fritzc C."/>
            <person name="Holzer E."/>
            <person name="Moestl D."/>
            <person name="Hilbert H."/>
            <person name="Borzym K."/>
            <person name="Langer I."/>
            <person name="Beck A."/>
            <person name="Lehrach H."/>
            <person name="Reinhardt R."/>
            <person name="Pohl T.M."/>
            <person name="Eger P."/>
            <person name="Zimmermann W."/>
            <person name="Wedler H."/>
            <person name="Wambutt R."/>
            <person name="Purnelle B."/>
            <person name="Goffeau A."/>
            <person name="Cadieu E."/>
            <person name="Dreano S."/>
            <person name="Gloux S."/>
            <person name="Lelaure V."/>
            <person name="Mottier S."/>
            <person name="Galibert F."/>
            <person name="Aves S.J."/>
            <person name="Xiang Z."/>
            <person name="Hunt C."/>
            <person name="Moore K."/>
            <person name="Hurst S.M."/>
            <person name="Lucas M."/>
            <person name="Rochet M."/>
            <person name="Gaillardin C."/>
            <person name="Tallada V.A."/>
            <person name="Garzon A."/>
            <person name="Thode G."/>
            <person name="Daga R.R."/>
            <person name="Cruzado L."/>
            <person name="Jimenez J."/>
            <person name="Sanchez M."/>
            <person name="del Rey F."/>
            <person name="Benito J."/>
            <person name="Dominguez A."/>
            <person name="Revuelta J.L."/>
            <person name="Moreno S."/>
            <person name="Armstrong J."/>
            <person name="Forsburg S.L."/>
            <person name="Cerutti L."/>
            <person name="Lowe T."/>
            <person name="McCombie W.R."/>
            <person name="Paulsen I."/>
            <person name="Potashkin J."/>
            <person name="Shpakovski G.V."/>
            <person name="Ussery D."/>
            <person name="Barrell B.G."/>
            <person name="Nurse P."/>
        </authorList>
    </citation>
    <scope>NUCLEOTIDE SEQUENCE [LARGE SCALE GENOMIC DNA]</scope>
    <source>
        <strain>972 / ATCC 24843</strain>
    </source>
</reference>
<reference key="3">
    <citation type="journal article" date="2008" name="J. Proteome Res.">
        <title>Phosphoproteome analysis of fission yeast.</title>
        <authorList>
            <person name="Wilson-Grady J.T."/>
            <person name="Villen J."/>
            <person name="Gygi S.P."/>
        </authorList>
    </citation>
    <scope>PHOSPHORYLATION [LARGE SCALE ANALYSIS] AT SER-119</scope>
    <scope>IDENTIFICATION BY MASS SPECTROMETRY</scope>
</reference>
<reference key="4">
    <citation type="journal article" date="2021" name="Biochim. Biophys. Acta">
        <title>Stm1 is a vacuolar PQ-loop protein involved in the transport of basic amino acids in Schizosaccharomyces pombe.</title>
        <authorList>
            <person name="Kawano-Kawada M."/>
            <person name="Ueda T."/>
            <person name="Mori H."/>
            <person name="Ichimura H."/>
            <person name="Takegawa K."/>
            <person name="Sekito T."/>
        </authorList>
    </citation>
    <scope>FUNCTION</scope>
    <scope>CATALYTIC ACTIVITY</scope>
    <scope>SUBCELLULAR LOCATION</scope>
    <scope>DISRUPTION PHENOTYPE</scope>
    <scope>MUTAGENESIS OF PRO-35 AND PRO-195</scope>
</reference>
<organism>
    <name type="scientific">Schizosaccharomyces pombe (strain 972 / ATCC 24843)</name>
    <name type="common">Fission yeast</name>
    <dbReference type="NCBI Taxonomy" id="284812"/>
    <lineage>
        <taxon>Eukaryota</taxon>
        <taxon>Fungi</taxon>
        <taxon>Dikarya</taxon>
        <taxon>Ascomycota</taxon>
        <taxon>Taphrinomycotina</taxon>
        <taxon>Schizosaccharomycetes</taxon>
        <taxon>Schizosaccharomycetales</taxon>
        <taxon>Schizosaccharomycetaceae</taxon>
        <taxon>Schizosaccharomyces</taxon>
    </lineage>
</organism>
<name>STM1_SCHPO</name>
<accession>Q10482</accession>
<sequence>MSVIAPSFDMANILTELSSFLGALSLGCWVVLLIPQLLENYKNQSGESISDLFLIIWLIGDFFNVLGSIYGNVSSTVLVLSFYYIVSDSTLLMQIYYYRWKAARRIASREHEPLLQSRSLEEGLHAPIGKQQIWWDRLSTRQQFGVMGCVVIVSTIVGNLIISSASSDKSDDDLNAWPFTAGCISSVLYFCARIPQIIKNHKAKSTEGLSIIFFVLASVGNTSYAFSILVFPASDYLNYTYANLPWILGAFSTIFLDIYIFYQFIKYRNHY</sequence>
<proteinExistence type="evidence at protein level"/>
<evidence type="ECO:0000255" key="1"/>
<evidence type="ECO:0000269" key="2">
    <source>
    </source>
</evidence>
<evidence type="ECO:0000269" key="3">
    <source>
    </source>
</evidence>
<evidence type="ECO:0000305" key="4"/>
<evidence type="ECO:0000305" key="5">
    <source>
    </source>
</evidence>
<keyword id="KW-0029">Amino-acid transport</keyword>
<keyword id="KW-0472">Membrane</keyword>
<keyword id="KW-0597">Phosphoprotein</keyword>
<keyword id="KW-1185">Reference proteome</keyword>
<keyword id="KW-0677">Repeat</keyword>
<keyword id="KW-0812">Transmembrane</keyword>
<keyword id="KW-1133">Transmembrane helix</keyword>
<keyword id="KW-0813">Transport</keyword>
<keyword id="KW-0926">Vacuole</keyword>
<comment type="function">
    <text evidence="3">Amino acid transporter that moves basic amino acids across the vacuolar membrane (PubMed:33189720). Appears to function as an arginine/histidine antiporter (PubMed:33189720).</text>
</comment>
<comment type="catalytic activity">
    <reaction evidence="5">
        <text>L-histidine(out) + L-arginine(in) = L-histidine(in) + L-arginine(out)</text>
        <dbReference type="Rhea" id="RHEA:71063"/>
        <dbReference type="ChEBI" id="CHEBI:32682"/>
        <dbReference type="ChEBI" id="CHEBI:57595"/>
    </reaction>
</comment>
<comment type="subcellular location">
    <subcellularLocation>
        <location evidence="3">Vacuole membrane</location>
        <topology evidence="1">Multi-pass membrane protein</topology>
    </subcellularLocation>
</comment>
<comment type="disruption phenotype">
    <text evidence="3">Increases vacuolar arginine levels and decreases vacuolar lysine and histidine levels.</text>
</comment>
<comment type="similarity">
    <text evidence="4">Belongs to the laat-1 family.</text>
</comment>